<comment type="function">
    <text evidence="2">Catalyzes conversion of folates to polyglutamate derivatives allowing concentration of folate compounds in the cell and the intracellular retention of these cofactors, which are important substrates for most of the folate-dependent enzymes that are involved in one-carbon transfer reactions involved in purine, pyrimidine and amino acid synthesis. Required for methionine synthesis and maintenance of intact mitochondrial DNA. Involved in telomere maintenance (By similarity).</text>
</comment>
<comment type="catalytic activity">
    <reaction evidence="2">
        <text>(6S)-5,6,7,8-tetrahydrofolyl-(gamma-L-Glu)(n) + L-glutamate + ATP = (6S)-5,6,7,8-tetrahydrofolyl-(gamma-L-Glu)(n+1) + ADP + phosphate + H(+)</text>
        <dbReference type="Rhea" id="RHEA:10580"/>
        <dbReference type="Rhea" id="RHEA-COMP:14738"/>
        <dbReference type="Rhea" id="RHEA-COMP:14740"/>
        <dbReference type="ChEBI" id="CHEBI:15378"/>
        <dbReference type="ChEBI" id="CHEBI:29985"/>
        <dbReference type="ChEBI" id="CHEBI:30616"/>
        <dbReference type="ChEBI" id="CHEBI:43474"/>
        <dbReference type="ChEBI" id="CHEBI:141005"/>
        <dbReference type="ChEBI" id="CHEBI:456216"/>
        <dbReference type="EC" id="6.3.2.17"/>
    </reaction>
</comment>
<comment type="cofactor">
    <cofactor evidence="2">
        <name>a monovalent cation</name>
        <dbReference type="ChEBI" id="CHEBI:60242"/>
    </cofactor>
    <text evidence="2">A monovalent cation.</text>
</comment>
<comment type="pathway">
    <text evidence="2">Cofactor biosynthesis; tetrahydrofolylpolyglutamate biosynthesis.</text>
</comment>
<comment type="subcellular location">
    <subcellularLocation>
        <location evidence="2">Mitochondrion inner membrane</location>
    </subcellularLocation>
    <subcellularLocation>
        <location evidence="2">Mitochondrion matrix</location>
    </subcellularLocation>
    <subcellularLocation>
        <location evidence="2">Cytoplasm</location>
    </subcellularLocation>
</comment>
<comment type="similarity">
    <text evidence="2">Belongs to the folylpolyglutamate synthase family.</text>
</comment>
<proteinExistence type="inferred from homology"/>
<reference evidence="3" key="1">
    <citation type="journal article" date="2009" name="Proc. Natl. Acad. Sci. U.S.A.">
        <title>Eukaryote-to-eukaryote gene transfer events revealed by the genome sequence of the wine yeast Saccharomyces cerevisiae EC1118.</title>
        <authorList>
            <person name="Novo M."/>
            <person name="Bigey F."/>
            <person name="Beyne E."/>
            <person name="Galeote V."/>
            <person name="Gavory F."/>
            <person name="Mallet S."/>
            <person name="Cambon B."/>
            <person name="Legras J.-L."/>
            <person name="Wincker P."/>
            <person name="Casaregola S."/>
            <person name="Dequin S."/>
        </authorList>
    </citation>
    <scope>NUCLEOTIDE SEQUENCE [LARGE SCALE GENOMIC DNA]</scope>
    <source>
        <strain>Lalvin EC1118 / Prise de mousse</strain>
    </source>
</reference>
<dbReference type="EC" id="6.3.2.17" evidence="2"/>
<dbReference type="EMBL" id="FN394216">
    <property type="protein sequence ID" value="CAY86522.1"/>
    <property type="molecule type" value="Genomic_DNA"/>
</dbReference>
<dbReference type="SMR" id="C8ZGZ3"/>
<dbReference type="HOGENOM" id="CLU_015869_0_1_1"/>
<dbReference type="OrthoDB" id="19167at4893"/>
<dbReference type="UniPathway" id="UPA00850"/>
<dbReference type="Proteomes" id="UP000000286">
    <property type="component" value="Chromosome XV, Scaffold EC1118_1O4"/>
</dbReference>
<dbReference type="GO" id="GO:0005829">
    <property type="term" value="C:cytosol"/>
    <property type="evidence" value="ECO:0007669"/>
    <property type="project" value="TreeGrafter"/>
</dbReference>
<dbReference type="GO" id="GO:0005743">
    <property type="term" value="C:mitochondrial inner membrane"/>
    <property type="evidence" value="ECO:0007669"/>
    <property type="project" value="UniProtKB-SubCell"/>
</dbReference>
<dbReference type="GO" id="GO:0005759">
    <property type="term" value="C:mitochondrial matrix"/>
    <property type="evidence" value="ECO:0007669"/>
    <property type="project" value="UniProtKB-SubCell"/>
</dbReference>
<dbReference type="GO" id="GO:0005524">
    <property type="term" value="F:ATP binding"/>
    <property type="evidence" value="ECO:0007669"/>
    <property type="project" value="UniProtKB-KW"/>
</dbReference>
<dbReference type="GO" id="GO:0046872">
    <property type="term" value="F:metal ion binding"/>
    <property type="evidence" value="ECO:0007669"/>
    <property type="project" value="UniProtKB-KW"/>
</dbReference>
<dbReference type="GO" id="GO:0004326">
    <property type="term" value="F:tetrahydrofolylpolyglutamate synthase activity"/>
    <property type="evidence" value="ECO:0007669"/>
    <property type="project" value="UniProtKB-EC"/>
</dbReference>
<dbReference type="GO" id="GO:0006730">
    <property type="term" value="P:one-carbon metabolic process"/>
    <property type="evidence" value="ECO:0007669"/>
    <property type="project" value="UniProtKB-KW"/>
</dbReference>
<dbReference type="FunFam" id="3.40.1190.10:FF:000009">
    <property type="entry name" value="Folylpolyglutamate synthase"/>
    <property type="match status" value="1"/>
</dbReference>
<dbReference type="FunFam" id="3.90.190.20:FF:000009">
    <property type="entry name" value="Folylpolyglutamate synthase"/>
    <property type="match status" value="1"/>
</dbReference>
<dbReference type="Gene3D" id="3.90.190.20">
    <property type="entry name" value="Mur ligase, C-terminal domain"/>
    <property type="match status" value="1"/>
</dbReference>
<dbReference type="Gene3D" id="3.40.1190.10">
    <property type="entry name" value="Mur-like, catalytic domain"/>
    <property type="match status" value="1"/>
</dbReference>
<dbReference type="InterPro" id="IPR001645">
    <property type="entry name" value="Folylpolyglutamate_synth"/>
</dbReference>
<dbReference type="InterPro" id="IPR018109">
    <property type="entry name" value="Folylpolyglutamate_synth_CS"/>
</dbReference>
<dbReference type="InterPro" id="IPR023600">
    <property type="entry name" value="Folylpolyglutamate_synth_euk"/>
</dbReference>
<dbReference type="InterPro" id="IPR036565">
    <property type="entry name" value="Mur-like_cat_sf"/>
</dbReference>
<dbReference type="InterPro" id="IPR036615">
    <property type="entry name" value="Mur_ligase_C_dom_sf"/>
</dbReference>
<dbReference type="NCBIfam" id="TIGR01499">
    <property type="entry name" value="folC"/>
    <property type="match status" value="1"/>
</dbReference>
<dbReference type="PANTHER" id="PTHR11136:SF5">
    <property type="entry name" value="FOLYLPOLYGLUTAMATE SYNTHASE, MITOCHONDRIAL"/>
    <property type="match status" value="1"/>
</dbReference>
<dbReference type="PANTHER" id="PTHR11136">
    <property type="entry name" value="FOLYLPOLYGLUTAMATE SYNTHASE-RELATED"/>
    <property type="match status" value="1"/>
</dbReference>
<dbReference type="PIRSF" id="PIRSF038895">
    <property type="entry name" value="FPGS"/>
    <property type="match status" value="1"/>
</dbReference>
<dbReference type="SUPFAM" id="SSF53623">
    <property type="entry name" value="MurD-like peptide ligases, catalytic domain"/>
    <property type="match status" value="1"/>
</dbReference>
<dbReference type="SUPFAM" id="SSF53244">
    <property type="entry name" value="MurD-like peptide ligases, peptide-binding domain"/>
    <property type="match status" value="1"/>
</dbReference>
<dbReference type="PROSITE" id="PS01011">
    <property type="entry name" value="FOLYLPOLYGLU_SYNT_1"/>
    <property type="match status" value="1"/>
</dbReference>
<dbReference type="PROSITE" id="PS01012">
    <property type="entry name" value="FOLYLPOLYGLU_SYNT_2"/>
    <property type="match status" value="1"/>
</dbReference>
<keyword id="KW-0067">ATP-binding</keyword>
<keyword id="KW-0963">Cytoplasm</keyword>
<keyword id="KW-0436">Ligase</keyword>
<keyword id="KW-0460">Magnesium</keyword>
<keyword id="KW-0472">Membrane</keyword>
<keyword id="KW-0479">Metal-binding</keyword>
<keyword id="KW-0496">Mitochondrion</keyword>
<keyword id="KW-0999">Mitochondrion inner membrane</keyword>
<keyword id="KW-0547">Nucleotide-binding</keyword>
<keyword id="KW-0554">One-carbon metabolism</keyword>
<sequence length="548" mass="62151">MHKGKKNYPNLITSFRMNLKKIILNHDRFSHPERWKTNALLRFTFVYIKFLFDLMIIKNPLRMVGKTYRDAVTALNSLQSNYANIMAIRQTGDRKNTMTLLEMHEWSRRIGYSASDFNKLNIVHITGTKGKGSTAAFTSSILGQYKEQLPRIGLYTSPHLKSVRERIRINGEPISEEKFAKYFFEVWDRLDSTTSSLDKFPHMIPGSKPGYFKFLTLLSFHTFIQEDCKSCVYEVGVGGELDSTNIIEKPIVCGVTLLGIDHTFMLGDTIEEIAWNKGGIFKSGAPAFTVEKQPPQGLTILKERAEERKTTLTEVPPFKQLENVKLGIAGEFQKSNASLAVMLASEILHTSNILEEKIKCSSNASIPEKFIIGLQNTKWEGRCQVLEKGKNVWYIDGAHTKDSMVAASTWFRDMVRLSKRKKILLFNQQSRDANALVNNLYSSVSPEITFDDVIFTTNVTWKSGSYSADLVSMNTSQEDVEKLKVQESLVKNWNKIDDNRAKTHVTASIEEANELIETLYDEPADIFVTGSLHLVGGLLVVFDRIDVK</sequence>
<feature type="chain" id="PRO_0000414492" description="Folylpolyglutamate synthase">
    <location>
        <begin position="1"/>
        <end position="548"/>
    </location>
</feature>
<feature type="binding site" evidence="1">
    <location>
        <begin position="130"/>
        <end position="133"/>
    </location>
    <ligand>
        <name>ATP</name>
        <dbReference type="ChEBI" id="CHEBI:30616"/>
    </ligand>
</feature>
<feature type="binding site" evidence="1">
    <location>
        <position position="157"/>
    </location>
    <ligand>
        <name>Mg(2+)</name>
        <dbReference type="ChEBI" id="CHEBI:18420"/>
        <label>1</label>
    </ligand>
</feature>
<feature type="binding site" evidence="1">
    <location>
        <position position="234"/>
    </location>
    <ligand>
        <name>Mg(2+)</name>
        <dbReference type="ChEBI" id="CHEBI:18420"/>
        <label>1</label>
    </ligand>
</feature>
<feature type="binding site" evidence="1">
    <location>
        <position position="262"/>
    </location>
    <ligand>
        <name>Mg(2+)</name>
        <dbReference type="ChEBI" id="CHEBI:18420"/>
        <label>2</label>
    </ligand>
</feature>
<feature type="binding site" evidence="1">
    <location>
        <position position="382"/>
    </location>
    <ligand>
        <name>ATP</name>
        <dbReference type="ChEBI" id="CHEBI:30616"/>
    </ligand>
</feature>
<feature type="binding site" evidence="1">
    <location>
        <position position="396"/>
    </location>
    <ligand>
        <name>ATP</name>
        <dbReference type="ChEBI" id="CHEBI:30616"/>
    </ligand>
</feature>
<organism>
    <name type="scientific">Saccharomyces cerevisiae (strain Lalvin EC1118 / Prise de mousse)</name>
    <name type="common">Baker's yeast</name>
    <dbReference type="NCBI Taxonomy" id="643680"/>
    <lineage>
        <taxon>Eukaryota</taxon>
        <taxon>Fungi</taxon>
        <taxon>Dikarya</taxon>
        <taxon>Ascomycota</taxon>
        <taxon>Saccharomycotina</taxon>
        <taxon>Saccharomycetes</taxon>
        <taxon>Saccharomycetales</taxon>
        <taxon>Saccharomycetaceae</taxon>
        <taxon>Saccharomyces</taxon>
    </lineage>
</organism>
<accession>C8ZGZ3</accession>
<gene>
    <name evidence="2" type="primary">MET7</name>
    <name type="ORF">EC1118_1O4_4687g</name>
</gene>
<name>FOLE_YEAS8</name>
<evidence type="ECO:0000250" key="1">
    <source>
        <dbReference type="UniProtKB" id="P08192"/>
    </source>
</evidence>
<evidence type="ECO:0000250" key="2">
    <source>
        <dbReference type="UniProtKB" id="Q08645"/>
    </source>
</evidence>
<evidence type="ECO:0000312" key="3">
    <source>
        <dbReference type="EMBL" id="CAY86522.1"/>
    </source>
</evidence>
<protein>
    <recommendedName>
        <fullName evidence="2">Folylpolyglutamate synthase</fullName>
        <ecNumber evidence="2">6.3.2.17</ecNumber>
    </recommendedName>
    <alternativeName>
        <fullName evidence="2">Folylpoly-gamma-glutamate synthetase</fullName>
        <shortName evidence="2">FPGS</shortName>
    </alternativeName>
    <alternativeName>
        <fullName evidence="2">Tetrahydrofolylpolyglutamate synthase</fullName>
        <shortName evidence="2">Tetrahydrofolate synthase</shortName>
    </alternativeName>
</protein>